<proteinExistence type="inferred from homology"/>
<accession>A4SHP8</accession>
<gene>
    <name evidence="1" type="primary">pyrB</name>
    <name type="ordered locus">ASA_0228</name>
</gene>
<evidence type="ECO:0000255" key="1">
    <source>
        <dbReference type="HAMAP-Rule" id="MF_00001"/>
    </source>
</evidence>
<organism>
    <name type="scientific">Aeromonas salmonicida (strain A449)</name>
    <dbReference type="NCBI Taxonomy" id="382245"/>
    <lineage>
        <taxon>Bacteria</taxon>
        <taxon>Pseudomonadati</taxon>
        <taxon>Pseudomonadota</taxon>
        <taxon>Gammaproteobacteria</taxon>
        <taxon>Aeromonadales</taxon>
        <taxon>Aeromonadaceae</taxon>
        <taxon>Aeromonas</taxon>
    </lineage>
</organism>
<name>PYRB_AERS4</name>
<comment type="function">
    <text evidence="1">Catalyzes the condensation of carbamoyl phosphate and aspartate to form carbamoyl aspartate and inorganic phosphate, the committed step in the de novo pyrimidine nucleotide biosynthesis pathway.</text>
</comment>
<comment type="catalytic activity">
    <reaction evidence="1">
        <text>carbamoyl phosphate + L-aspartate = N-carbamoyl-L-aspartate + phosphate + H(+)</text>
        <dbReference type="Rhea" id="RHEA:20013"/>
        <dbReference type="ChEBI" id="CHEBI:15378"/>
        <dbReference type="ChEBI" id="CHEBI:29991"/>
        <dbReference type="ChEBI" id="CHEBI:32814"/>
        <dbReference type="ChEBI" id="CHEBI:43474"/>
        <dbReference type="ChEBI" id="CHEBI:58228"/>
        <dbReference type="EC" id="2.1.3.2"/>
    </reaction>
</comment>
<comment type="pathway">
    <text evidence="1">Pyrimidine metabolism; UMP biosynthesis via de novo pathway; (S)-dihydroorotate from bicarbonate: step 2/3.</text>
</comment>
<comment type="subunit">
    <text evidence="1">Heterododecamer (2C3:3R2) of six catalytic PyrB chains organized as two trimers (C3), and six regulatory PyrI chains organized as three dimers (R2).</text>
</comment>
<comment type="similarity">
    <text evidence="1">Belongs to the aspartate/ornithine carbamoyltransferase superfamily. ATCase family.</text>
</comment>
<sequence length="306" mass="34138">MTNPLYKKHVISISDLTRPDMELVVATAQRLKAEPDTRLLKDKLIASCFFEASTRTRLSFETAVQRLGGNIIGFADGGNTSAKKGETLADSIKIIGSYSDAVVMRHPKEGAARLASEFSRVPVINGGDGSNQHPTQTLLDLFSIHETQGKLDGLNVAFVGDLKYGRTVHSLAQALSLFNCRFFFISPDALAMPDYICEELEEKGIRFSVHETMEEVMPELDILYMTRVQKERFDETEYKHMAAKFVLELATLEGAKPTMKILHPLPRVDEIDVAVDKTPYAYYFQQAENGVYARQALLALVLNETV</sequence>
<keyword id="KW-0665">Pyrimidine biosynthesis</keyword>
<keyword id="KW-0808">Transferase</keyword>
<protein>
    <recommendedName>
        <fullName evidence="1">Aspartate carbamoyltransferase catalytic subunit</fullName>
        <ecNumber evidence="1">2.1.3.2</ecNumber>
    </recommendedName>
    <alternativeName>
        <fullName evidence="1">Aspartate transcarbamylase</fullName>
        <shortName evidence="1">ATCase</shortName>
    </alternativeName>
</protein>
<feature type="chain" id="PRO_0000301549" description="Aspartate carbamoyltransferase catalytic subunit">
    <location>
        <begin position="1"/>
        <end position="306"/>
    </location>
</feature>
<feature type="binding site" evidence="1">
    <location>
        <position position="55"/>
    </location>
    <ligand>
        <name>carbamoyl phosphate</name>
        <dbReference type="ChEBI" id="CHEBI:58228"/>
    </ligand>
</feature>
<feature type="binding site" evidence="1">
    <location>
        <position position="56"/>
    </location>
    <ligand>
        <name>carbamoyl phosphate</name>
        <dbReference type="ChEBI" id="CHEBI:58228"/>
    </ligand>
</feature>
<feature type="binding site" evidence="1">
    <location>
        <position position="84"/>
    </location>
    <ligand>
        <name>L-aspartate</name>
        <dbReference type="ChEBI" id="CHEBI:29991"/>
    </ligand>
</feature>
<feature type="binding site" evidence="1">
    <location>
        <position position="105"/>
    </location>
    <ligand>
        <name>carbamoyl phosphate</name>
        <dbReference type="ChEBI" id="CHEBI:58228"/>
    </ligand>
</feature>
<feature type="binding site" evidence="1">
    <location>
        <position position="133"/>
    </location>
    <ligand>
        <name>carbamoyl phosphate</name>
        <dbReference type="ChEBI" id="CHEBI:58228"/>
    </ligand>
</feature>
<feature type="binding site" evidence="1">
    <location>
        <position position="136"/>
    </location>
    <ligand>
        <name>carbamoyl phosphate</name>
        <dbReference type="ChEBI" id="CHEBI:58228"/>
    </ligand>
</feature>
<feature type="binding site" evidence="1">
    <location>
        <position position="166"/>
    </location>
    <ligand>
        <name>L-aspartate</name>
        <dbReference type="ChEBI" id="CHEBI:29991"/>
    </ligand>
</feature>
<feature type="binding site" evidence="1">
    <location>
        <position position="227"/>
    </location>
    <ligand>
        <name>L-aspartate</name>
        <dbReference type="ChEBI" id="CHEBI:29991"/>
    </ligand>
</feature>
<feature type="binding site" evidence="1">
    <location>
        <position position="265"/>
    </location>
    <ligand>
        <name>carbamoyl phosphate</name>
        <dbReference type="ChEBI" id="CHEBI:58228"/>
    </ligand>
</feature>
<feature type="binding site" evidence="1">
    <location>
        <position position="266"/>
    </location>
    <ligand>
        <name>carbamoyl phosphate</name>
        <dbReference type="ChEBI" id="CHEBI:58228"/>
    </ligand>
</feature>
<reference key="1">
    <citation type="journal article" date="2008" name="BMC Genomics">
        <title>The genome of Aeromonas salmonicida subsp. salmonicida A449: insights into the evolution of a fish pathogen.</title>
        <authorList>
            <person name="Reith M.E."/>
            <person name="Singh R.K."/>
            <person name="Curtis B."/>
            <person name="Boyd J.M."/>
            <person name="Bouevitch A."/>
            <person name="Kimball J."/>
            <person name="Munholland J."/>
            <person name="Murphy C."/>
            <person name="Sarty D."/>
            <person name="Williams J."/>
            <person name="Nash J.H."/>
            <person name="Johnson S.C."/>
            <person name="Brown L.L."/>
        </authorList>
    </citation>
    <scope>NUCLEOTIDE SEQUENCE [LARGE SCALE GENOMIC DNA]</scope>
    <source>
        <strain>A449</strain>
    </source>
</reference>
<dbReference type="EC" id="2.1.3.2" evidence="1"/>
<dbReference type="EMBL" id="CP000644">
    <property type="protein sequence ID" value="ABO88420.1"/>
    <property type="molecule type" value="Genomic_DNA"/>
</dbReference>
<dbReference type="RefSeq" id="WP_005318439.1">
    <property type="nucleotide sequence ID" value="NC_009348.1"/>
</dbReference>
<dbReference type="SMR" id="A4SHP8"/>
<dbReference type="STRING" id="29491.GCA_000820065_01302"/>
<dbReference type="KEGG" id="asa:ASA_0228"/>
<dbReference type="eggNOG" id="COG0540">
    <property type="taxonomic scope" value="Bacteria"/>
</dbReference>
<dbReference type="HOGENOM" id="CLU_043846_1_2_6"/>
<dbReference type="UniPathway" id="UPA00070">
    <property type="reaction ID" value="UER00116"/>
</dbReference>
<dbReference type="Proteomes" id="UP000000225">
    <property type="component" value="Chromosome"/>
</dbReference>
<dbReference type="GO" id="GO:0005829">
    <property type="term" value="C:cytosol"/>
    <property type="evidence" value="ECO:0007669"/>
    <property type="project" value="TreeGrafter"/>
</dbReference>
<dbReference type="GO" id="GO:0016597">
    <property type="term" value="F:amino acid binding"/>
    <property type="evidence" value="ECO:0007669"/>
    <property type="project" value="InterPro"/>
</dbReference>
<dbReference type="GO" id="GO:0004070">
    <property type="term" value="F:aspartate carbamoyltransferase activity"/>
    <property type="evidence" value="ECO:0007669"/>
    <property type="project" value="UniProtKB-UniRule"/>
</dbReference>
<dbReference type="GO" id="GO:0006207">
    <property type="term" value="P:'de novo' pyrimidine nucleobase biosynthetic process"/>
    <property type="evidence" value="ECO:0007669"/>
    <property type="project" value="InterPro"/>
</dbReference>
<dbReference type="GO" id="GO:0044205">
    <property type="term" value="P:'de novo' UMP biosynthetic process"/>
    <property type="evidence" value="ECO:0007669"/>
    <property type="project" value="UniProtKB-UniRule"/>
</dbReference>
<dbReference type="GO" id="GO:0006520">
    <property type="term" value="P:amino acid metabolic process"/>
    <property type="evidence" value="ECO:0007669"/>
    <property type="project" value="InterPro"/>
</dbReference>
<dbReference type="FunFam" id="3.40.50.1370:FF:000001">
    <property type="entry name" value="Aspartate carbamoyltransferase"/>
    <property type="match status" value="1"/>
</dbReference>
<dbReference type="FunFam" id="3.40.50.1370:FF:000002">
    <property type="entry name" value="Aspartate carbamoyltransferase 2"/>
    <property type="match status" value="1"/>
</dbReference>
<dbReference type="Gene3D" id="3.40.50.1370">
    <property type="entry name" value="Aspartate/ornithine carbamoyltransferase"/>
    <property type="match status" value="2"/>
</dbReference>
<dbReference type="HAMAP" id="MF_00001">
    <property type="entry name" value="Asp_carb_tr"/>
    <property type="match status" value="1"/>
</dbReference>
<dbReference type="InterPro" id="IPR006132">
    <property type="entry name" value="Asp/Orn_carbamoyltranf_P-bd"/>
</dbReference>
<dbReference type="InterPro" id="IPR006130">
    <property type="entry name" value="Asp/Orn_carbamoylTrfase"/>
</dbReference>
<dbReference type="InterPro" id="IPR036901">
    <property type="entry name" value="Asp/Orn_carbamoylTrfase_sf"/>
</dbReference>
<dbReference type="InterPro" id="IPR002082">
    <property type="entry name" value="Asp_carbamoyltransf"/>
</dbReference>
<dbReference type="InterPro" id="IPR006131">
    <property type="entry name" value="Asp_carbamoyltransf_Asp/Orn-bd"/>
</dbReference>
<dbReference type="NCBIfam" id="TIGR00670">
    <property type="entry name" value="asp_carb_tr"/>
    <property type="match status" value="1"/>
</dbReference>
<dbReference type="NCBIfam" id="NF002032">
    <property type="entry name" value="PRK00856.1"/>
    <property type="match status" value="1"/>
</dbReference>
<dbReference type="PANTHER" id="PTHR45753:SF6">
    <property type="entry name" value="ASPARTATE CARBAMOYLTRANSFERASE"/>
    <property type="match status" value="1"/>
</dbReference>
<dbReference type="PANTHER" id="PTHR45753">
    <property type="entry name" value="ORNITHINE CARBAMOYLTRANSFERASE, MITOCHONDRIAL"/>
    <property type="match status" value="1"/>
</dbReference>
<dbReference type="Pfam" id="PF00185">
    <property type="entry name" value="OTCace"/>
    <property type="match status" value="1"/>
</dbReference>
<dbReference type="Pfam" id="PF02729">
    <property type="entry name" value="OTCace_N"/>
    <property type="match status" value="1"/>
</dbReference>
<dbReference type="PRINTS" id="PR00100">
    <property type="entry name" value="AOTCASE"/>
</dbReference>
<dbReference type="PRINTS" id="PR00101">
    <property type="entry name" value="ATCASE"/>
</dbReference>
<dbReference type="SUPFAM" id="SSF53671">
    <property type="entry name" value="Aspartate/ornithine carbamoyltransferase"/>
    <property type="match status" value="1"/>
</dbReference>
<dbReference type="PROSITE" id="PS00097">
    <property type="entry name" value="CARBAMOYLTRANSFERASE"/>
    <property type="match status" value="1"/>
</dbReference>